<gene>
    <name evidence="1" type="primary">rplO</name>
    <name type="ordered locus">ABAYE0427</name>
</gene>
<reference key="1">
    <citation type="journal article" date="2008" name="PLoS ONE">
        <title>Comparative analysis of Acinetobacters: three genomes for three lifestyles.</title>
        <authorList>
            <person name="Vallenet D."/>
            <person name="Nordmann P."/>
            <person name="Barbe V."/>
            <person name="Poirel L."/>
            <person name="Mangenot S."/>
            <person name="Bataille E."/>
            <person name="Dossat C."/>
            <person name="Gas S."/>
            <person name="Kreimeyer A."/>
            <person name="Lenoble P."/>
            <person name="Oztas S."/>
            <person name="Poulain J."/>
            <person name="Segurens B."/>
            <person name="Robert C."/>
            <person name="Abergel C."/>
            <person name="Claverie J.-M."/>
            <person name="Raoult D."/>
            <person name="Medigue C."/>
            <person name="Weissenbach J."/>
            <person name="Cruveiller S."/>
        </authorList>
    </citation>
    <scope>NUCLEOTIDE SEQUENCE [LARGE SCALE GENOMIC DNA]</scope>
    <source>
        <strain>AYE</strain>
    </source>
</reference>
<comment type="function">
    <text evidence="1">Binds to the 23S rRNA.</text>
</comment>
<comment type="subunit">
    <text evidence="1">Part of the 50S ribosomal subunit.</text>
</comment>
<comment type="similarity">
    <text evidence="1">Belongs to the universal ribosomal protein uL15 family.</text>
</comment>
<feature type="chain" id="PRO_1000142760" description="Large ribosomal subunit protein uL15">
    <location>
        <begin position="1"/>
        <end position="146"/>
    </location>
</feature>
<feature type="region of interest" description="Disordered" evidence="2">
    <location>
        <begin position="1"/>
        <end position="54"/>
    </location>
</feature>
<feature type="compositionally biased region" description="Gly residues" evidence="2">
    <location>
        <begin position="23"/>
        <end position="37"/>
    </location>
</feature>
<protein>
    <recommendedName>
        <fullName evidence="1">Large ribosomal subunit protein uL15</fullName>
    </recommendedName>
    <alternativeName>
        <fullName evidence="3">50S ribosomal protein L15</fullName>
    </alternativeName>
</protein>
<evidence type="ECO:0000255" key="1">
    <source>
        <dbReference type="HAMAP-Rule" id="MF_01341"/>
    </source>
</evidence>
<evidence type="ECO:0000256" key="2">
    <source>
        <dbReference type="SAM" id="MobiDB-lite"/>
    </source>
</evidence>
<evidence type="ECO:0000305" key="3"/>
<dbReference type="EMBL" id="CU459141">
    <property type="protein sequence ID" value="CAM85401.1"/>
    <property type="molecule type" value="Genomic_DNA"/>
</dbReference>
<dbReference type="RefSeq" id="WP_000175340.1">
    <property type="nucleotide sequence ID" value="NZ_JBDGFB010000011.1"/>
</dbReference>
<dbReference type="SMR" id="B0V6W4"/>
<dbReference type="EnsemblBacteria" id="CAM85401">
    <property type="protein sequence ID" value="CAM85401"/>
    <property type="gene ID" value="ABAYE0427"/>
</dbReference>
<dbReference type="GeneID" id="92895298"/>
<dbReference type="KEGG" id="aby:ABAYE0427"/>
<dbReference type="HOGENOM" id="CLU_055188_4_2_6"/>
<dbReference type="GO" id="GO:0022625">
    <property type="term" value="C:cytosolic large ribosomal subunit"/>
    <property type="evidence" value="ECO:0007669"/>
    <property type="project" value="TreeGrafter"/>
</dbReference>
<dbReference type="GO" id="GO:0019843">
    <property type="term" value="F:rRNA binding"/>
    <property type="evidence" value="ECO:0007669"/>
    <property type="project" value="UniProtKB-UniRule"/>
</dbReference>
<dbReference type="GO" id="GO:0003735">
    <property type="term" value="F:structural constituent of ribosome"/>
    <property type="evidence" value="ECO:0007669"/>
    <property type="project" value="InterPro"/>
</dbReference>
<dbReference type="GO" id="GO:0006412">
    <property type="term" value="P:translation"/>
    <property type="evidence" value="ECO:0007669"/>
    <property type="project" value="UniProtKB-UniRule"/>
</dbReference>
<dbReference type="Gene3D" id="3.100.10.10">
    <property type="match status" value="1"/>
</dbReference>
<dbReference type="HAMAP" id="MF_01341">
    <property type="entry name" value="Ribosomal_uL15"/>
    <property type="match status" value="1"/>
</dbReference>
<dbReference type="InterPro" id="IPR030878">
    <property type="entry name" value="Ribosomal_uL15"/>
</dbReference>
<dbReference type="InterPro" id="IPR021131">
    <property type="entry name" value="Ribosomal_uL15/eL18"/>
</dbReference>
<dbReference type="InterPro" id="IPR036227">
    <property type="entry name" value="Ribosomal_uL15/eL18_sf"/>
</dbReference>
<dbReference type="InterPro" id="IPR005749">
    <property type="entry name" value="Ribosomal_uL15_bac-type"/>
</dbReference>
<dbReference type="InterPro" id="IPR001196">
    <property type="entry name" value="Ribosomal_uL15_CS"/>
</dbReference>
<dbReference type="NCBIfam" id="TIGR01071">
    <property type="entry name" value="rplO_bact"/>
    <property type="match status" value="1"/>
</dbReference>
<dbReference type="PANTHER" id="PTHR12934">
    <property type="entry name" value="50S RIBOSOMAL PROTEIN L15"/>
    <property type="match status" value="1"/>
</dbReference>
<dbReference type="PANTHER" id="PTHR12934:SF11">
    <property type="entry name" value="LARGE RIBOSOMAL SUBUNIT PROTEIN UL15M"/>
    <property type="match status" value="1"/>
</dbReference>
<dbReference type="Pfam" id="PF00828">
    <property type="entry name" value="Ribosomal_L27A"/>
    <property type="match status" value="1"/>
</dbReference>
<dbReference type="SUPFAM" id="SSF52080">
    <property type="entry name" value="Ribosomal proteins L15p and L18e"/>
    <property type="match status" value="1"/>
</dbReference>
<dbReference type="PROSITE" id="PS00475">
    <property type="entry name" value="RIBOSOMAL_L15"/>
    <property type="match status" value="1"/>
</dbReference>
<proteinExistence type="inferred from homology"/>
<keyword id="KW-0687">Ribonucleoprotein</keyword>
<keyword id="KW-0689">Ribosomal protein</keyword>
<keyword id="KW-0694">RNA-binding</keyword>
<keyword id="KW-0699">rRNA-binding</keyword>
<sequence>MTLRLNELAPAEGAKREHRRLGRGIGSGVGKTGGRGIKGQKSRKSGGVRPGFEGGQTAIYRRLPKFGFTSQIALKTAEVRLSELSKVEGDIVSLETLKAANVVRRDQIRARIVLSGEITRAFTVQGVALTKGAKAAIEAAGGKVEE</sequence>
<name>RL15_ACIBY</name>
<organism>
    <name type="scientific">Acinetobacter baumannii (strain AYE)</name>
    <dbReference type="NCBI Taxonomy" id="509173"/>
    <lineage>
        <taxon>Bacteria</taxon>
        <taxon>Pseudomonadati</taxon>
        <taxon>Pseudomonadota</taxon>
        <taxon>Gammaproteobacteria</taxon>
        <taxon>Moraxellales</taxon>
        <taxon>Moraxellaceae</taxon>
        <taxon>Acinetobacter</taxon>
        <taxon>Acinetobacter calcoaceticus/baumannii complex</taxon>
    </lineage>
</organism>
<accession>B0V6W4</accession>